<reference key="1">
    <citation type="journal article" date="2003" name="Genome Res.">
        <title>Comparative complete genome sequence analysis of the amino acid replacements responsible for the thermostability of Corynebacterium efficiens.</title>
        <authorList>
            <person name="Nishio Y."/>
            <person name="Nakamura Y."/>
            <person name="Kawarabayasi Y."/>
            <person name="Usuda Y."/>
            <person name="Kimura E."/>
            <person name="Sugimoto S."/>
            <person name="Matsui K."/>
            <person name="Yamagishi A."/>
            <person name="Kikuchi H."/>
            <person name="Ikeo K."/>
            <person name="Gojobori T."/>
        </authorList>
    </citation>
    <scope>NUCLEOTIDE SEQUENCE [LARGE SCALE GENOMIC DNA]</scope>
    <source>
        <strain>DSM 44549 / YS-314 / AJ 12310 / JCM 11189 / NBRC 100395</strain>
    </source>
</reference>
<evidence type="ECO:0000255" key="1">
    <source>
        <dbReference type="HAMAP-Rule" id="MF_00691"/>
    </source>
</evidence>
<proteinExistence type="inferred from homology"/>
<sequence length="255" mass="27016">MNPPHSIDLNSDLGESYGSWVMGNDEAVLDLVSSANIACGFHAGDATVLLKTVVAAKARNVRIGAHIGYNDLTGFGRRAMEYDHEVLVAETIYQIGAIQAAATTVGATVDYVKPHGALYNRIAVDEAQAAAVIEAMKKLNPELPLMVLSGAPIVEQAISEGLTVIQETFADRAYTSDGRLVSRTQTGAVHHDPQVAARQALAFATGGSITSIDGDPVTVHADSICVHGDNPAALELVRTIIDTLRAHDVEVRRAR</sequence>
<name>PXPA_COREF</name>
<keyword id="KW-0067">ATP-binding</keyword>
<keyword id="KW-0378">Hydrolase</keyword>
<keyword id="KW-0547">Nucleotide-binding</keyword>
<keyword id="KW-1185">Reference proteome</keyword>
<comment type="function">
    <text evidence="1">Catalyzes the cleavage of 5-oxoproline to form L-glutamate coupled to the hydrolysis of ATP to ADP and inorganic phosphate.</text>
</comment>
<comment type="catalytic activity">
    <reaction evidence="1">
        <text>5-oxo-L-proline + ATP + 2 H2O = L-glutamate + ADP + phosphate + H(+)</text>
        <dbReference type="Rhea" id="RHEA:10348"/>
        <dbReference type="ChEBI" id="CHEBI:15377"/>
        <dbReference type="ChEBI" id="CHEBI:15378"/>
        <dbReference type="ChEBI" id="CHEBI:29985"/>
        <dbReference type="ChEBI" id="CHEBI:30616"/>
        <dbReference type="ChEBI" id="CHEBI:43474"/>
        <dbReference type="ChEBI" id="CHEBI:58402"/>
        <dbReference type="ChEBI" id="CHEBI:456216"/>
        <dbReference type="EC" id="3.5.2.9"/>
    </reaction>
</comment>
<comment type="subunit">
    <text evidence="1">Forms a complex composed of PxpA, PxpB and PxpC.</text>
</comment>
<comment type="similarity">
    <text evidence="1">Belongs to the LamB/PxpA family.</text>
</comment>
<dbReference type="EC" id="3.5.2.9" evidence="1"/>
<dbReference type="EMBL" id="BA000035">
    <property type="protein sequence ID" value="BAC17876.1"/>
    <property type="molecule type" value="Genomic_DNA"/>
</dbReference>
<dbReference type="RefSeq" id="WP_006769975.1">
    <property type="nucleotide sequence ID" value="NC_004369.1"/>
</dbReference>
<dbReference type="SMR" id="Q8FQQ3"/>
<dbReference type="STRING" id="196164.gene:10741474"/>
<dbReference type="KEGG" id="cef:CE1066"/>
<dbReference type="eggNOG" id="COG1540">
    <property type="taxonomic scope" value="Bacteria"/>
</dbReference>
<dbReference type="HOGENOM" id="CLU_069535_0_0_11"/>
<dbReference type="OrthoDB" id="9773478at2"/>
<dbReference type="Proteomes" id="UP000001409">
    <property type="component" value="Chromosome"/>
</dbReference>
<dbReference type="GO" id="GO:0017168">
    <property type="term" value="F:5-oxoprolinase (ATP-hydrolyzing) activity"/>
    <property type="evidence" value="ECO:0007669"/>
    <property type="project" value="UniProtKB-UniRule"/>
</dbReference>
<dbReference type="GO" id="GO:0005524">
    <property type="term" value="F:ATP binding"/>
    <property type="evidence" value="ECO:0007669"/>
    <property type="project" value="UniProtKB-UniRule"/>
</dbReference>
<dbReference type="GO" id="GO:0005975">
    <property type="term" value="P:carbohydrate metabolic process"/>
    <property type="evidence" value="ECO:0007669"/>
    <property type="project" value="InterPro"/>
</dbReference>
<dbReference type="CDD" id="cd10787">
    <property type="entry name" value="LamB_YcsF_like"/>
    <property type="match status" value="1"/>
</dbReference>
<dbReference type="Gene3D" id="3.20.20.370">
    <property type="entry name" value="Glycoside hydrolase/deacetylase"/>
    <property type="match status" value="1"/>
</dbReference>
<dbReference type="HAMAP" id="MF_00691">
    <property type="entry name" value="PxpA"/>
    <property type="match status" value="1"/>
</dbReference>
<dbReference type="InterPro" id="IPR011330">
    <property type="entry name" value="Glyco_hydro/deAcase_b/a-brl"/>
</dbReference>
<dbReference type="InterPro" id="IPR005501">
    <property type="entry name" value="LamB/YcsF/PxpA-like"/>
</dbReference>
<dbReference type="NCBIfam" id="NF003814">
    <property type="entry name" value="PRK05406.1-3"/>
    <property type="match status" value="1"/>
</dbReference>
<dbReference type="NCBIfam" id="NF003816">
    <property type="entry name" value="PRK05406.1-5"/>
    <property type="match status" value="1"/>
</dbReference>
<dbReference type="PANTHER" id="PTHR30292:SF0">
    <property type="entry name" value="5-OXOPROLINASE SUBUNIT A"/>
    <property type="match status" value="1"/>
</dbReference>
<dbReference type="PANTHER" id="PTHR30292">
    <property type="entry name" value="UNCHARACTERIZED PROTEIN YBGL-RELATED"/>
    <property type="match status" value="1"/>
</dbReference>
<dbReference type="Pfam" id="PF03746">
    <property type="entry name" value="LamB_YcsF"/>
    <property type="match status" value="1"/>
</dbReference>
<dbReference type="SUPFAM" id="SSF88713">
    <property type="entry name" value="Glycoside hydrolase/deacetylase"/>
    <property type="match status" value="1"/>
</dbReference>
<gene>
    <name evidence="1" type="primary">pxpA</name>
    <name type="ordered locus">CE1066</name>
</gene>
<protein>
    <recommendedName>
        <fullName evidence="1">5-oxoprolinase subunit A</fullName>
        <shortName evidence="1">5-OPase subunit A</shortName>
        <ecNumber evidence="1">3.5.2.9</ecNumber>
    </recommendedName>
    <alternativeName>
        <fullName evidence="1">5-oxoprolinase (ATP-hydrolyzing) subunit A</fullName>
    </alternativeName>
</protein>
<feature type="chain" id="PRO_0000185003" description="5-oxoprolinase subunit A">
    <location>
        <begin position="1"/>
        <end position="255"/>
    </location>
</feature>
<accession>Q8FQQ3</accession>
<organism>
    <name type="scientific">Corynebacterium efficiens (strain DSM 44549 / YS-314 / AJ 12310 / JCM 11189 / NBRC 100395)</name>
    <dbReference type="NCBI Taxonomy" id="196164"/>
    <lineage>
        <taxon>Bacteria</taxon>
        <taxon>Bacillati</taxon>
        <taxon>Actinomycetota</taxon>
        <taxon>Actinomycetes</taxon>
        <taxon>Mycobacteriales</taxon>
        <taxon>Corynebacteriaceae</taxon>
        <taxon>Corynebacterium</taxon>
    </lineage>
</organism>